<comment type="function">
    <text evidence="1">Responsible for synthesis of pseudouridine from uracil-55 in the psi GC loop of transfer RNAs.</text>
</comment>
<comment type="catalytic activity">
    <reaction evidence="1">
        <text>uridine(55) in tRNA = pseudouridine(55) in tRNA</text>
        <dbReference type="Rhea" id="RHEA:42532"/>
        <dbReference type="Rhea" id="RHEA-COMP:10101"/>
        <dbReference type="Rhea" id="RHEA-COMP:10102"/>
        <dbReference type="ChEBI" id="CHEBI:65314"/>
        <dbReference type="ChEBI" id="CHEBI:65315"/>
        <dbReference type="EC" id="5.4.99.25"/>
    </reaction>
</comment>
<comment type="similarity">
    <text evidence="1">Belongs to the pseudouridine synthase TruB family. Type 1 subfamily.</text>
</comment>
<reference key="1">
    <citation type="submission" date="2006-08" db="EMBL/GenBank/DDBJ databases">
        <title>Complete sequence of chromosome 1 of Shewanella sp. MR-7.</title>
        <authorList>
            <person name="Copeland A."/>
            <person name="Lucas S."/>
            <person name="Lapidus A."/>
            <person name="Barry K."/>
            <person name="Detter J.C."/>
            <person name="Glavina del Rio T."/>
            <person name="Hammon N."/>
            <person name="Israni S."/>
            <person name="Dalin E."/>
            <person name="Tice H."/>
            <person name="Pitluck S."/>
            <person name="Kiss H."/>
            <person name="Brettin T."/>
            <person name="Bruce D."/>
            <person name="Han C."/>
            <person name="Tapia R."/>
            <person name="Gilna P."/>
            <person name="Schmutz J."/>
            <person name="Larimer F."/>
            <person name="Land M."/>
            <person name="Hauser L."/>
            <person name="Kyrpides N."/>
            <person name="Mikhailova N."/>
            <person name="Nealson K."/>
            <person name="Konstantinidis K."/>
            <person name="Klappenbach J."/>
            <person name="Tiedje J."/>
            <person name="Richardson P."/>
        </authorList>
    </citation>
    <scope>NUCLEOTIDE SEQUENCE [LARGE SCALE GENOMIC DNA]</scope>
    <source>
        <strain>MR-7</strain>
    </source>
</reference>
<keyword id="KW-0413">Isomerase</keyword>
<keyword id="KW-0819">tRNA processing</keyword>
<proteinExistence type="inferred from homology"/>
<gene>
    <name evidence="1" type="primary">truB</name>
    <name type="ordered locus">Shewmr7_1093</name>
</gene>
<feature type="chain" id="PRO_1000084681" description="tRNA pseudouridine synthase B">
    <location>
        <begin position="1"/>
        <end position="317"/>
    </location>
</feature>
<feature type="active site" description="Nucleophile" evidence="1">
    <location>
        <position position="47"/>
    </location>
</feature>
<dbReference type="EC" id="5.4.99.25" evidence="1"/>
<dbReference type="EMBL" id="CP000444">
    <property type="protein sequence ID" value="ABI42092.1"/>
    <property type="molecule type" value="Genomic_DNA"/>
</dbReference>
<dbReference type="SMR" id="Q0HXR3"/>
<dbReference type="KEGG" id="shm:Shewmr7_1093"/>
<dbReference type="HOGENOM" id="CLU_032087_0_3_6"/>
<dbReference type="GO" id="GO:0003723">
    <property type="term" value="F:RNA binding"/>
    <property type="evidence" value="ECO:0007669"/>
    <property type="project" value="InterPro"/>
</dbReference>
<dbReference type="GO" id="GO:0160148">
    <property type="term" value="F:tRNA pseudouridine(55) synthase activity"/>
    <property type="evidence" value="ECO:0007669"/>
    <property type="project" value="UniProtKB-EC"/>
</dbReference>
<dbReference type="GO" id="GO:1990481">
    <property type="term" value="P:mRNA pseudouridine synthesis"/>
    <property type="evidence" value="ECO:0007669"/>
    <property type="project" value="TreeGrafter"/>
</dbReference>
<dbReference type="GO" id="GO:0031119">
    <property type="term" value="P:tRNA pseudouridine synthesis"/>
    <property type="evidence" value="ECO:0007669"/>
    <property type="project" value="UniProtKB-UniRule"/>
</dbReference>
<dbReference type="CDD" id="cd02573">
    <property type="entry name" value="PseudoU_synth_EcTruB"/>
    <property type="match status" value="1"/>
</dbReference>
<dbReference type="CDD" id="cd21152">
    <property type="entry name" value="PUA_TruB_bacterial"/>
    <property type="match status" value="1"/>
</dbReference>
<dbReference type="FunFam" id="2.30.130.10:FF:000004">
    <property type="entry name" value="tRNA pseudouridine synthase B"/>
    <property type="match status" value="1"/>
</dbReference>
<dbReference type="FunFam" id="3.30.2350.10:FF:000003">
    <property type="entry name" value="tRNA pseudouridine synthase B"/>
    <property type="match status" value="1"/>
</dbReference>
<dbReference type="Gene3D" id="3.30.2350.10">
    <property type="entry name" value="Pseudouridine synthase"/>
    <property type="match status" value="1"/>
</dbReference>
<dbReference type="Gene3D" id="2.30.130.10">
    <property type="entry name" value="PUA domain"/>
    <property type="match status" value="1"/>
</dbReference>
<dbReference type="HAMAP" id="MF_01080">
    <property type="entry name" value="TruB_bact"/>
    <property type="match status" value="1"/>
</dbReference>
<dbReference type="InterPro" id="IPR020103">
    <property type="entry name" value="PsdUridine_synth_cat_dom_sf"/>
</dbReference>
<dbReference type="InterPro" id="IPR002501">
    <property type="entry name" value="PsdUridine_synth_N"/>
</dbReference>
<dbReference type="InterPro" id="IPR015947">
    <property type="entry name" value="PUA-like_sf"/>
</dbReference>
<dbReference type="InterPro" id="IPR036974">
    <property type="entry name" value="PUA_sf"/>
</dbReference>
<dbReference type="InterPro" id="IPR014780">
    <property type="entry name" value="tRNA_psdUridine_synth_TruB"/>
</dbReference>
<dbReference type="InterPro" id="IPR015240">
    <property type="entry name" value="tRNA_sdUridine_synth_fam1_C"/>
</dbReference>
<dbReference type="InterPro" id="IPR032819">
    <property type="entry name" value="TruB_C"/>
</dbReference>
<dbReference type="NCBIfam" id="TIGR00431">
    <property type="entry name" value="TruB"/>
    <property type="match status" value="1"/>
</dbReference>
<dbReference type="PANTHER" id="PTHR13767:SF2">
    <property type="entry name" value="PSEUDOURIDYLATE SYNTHASE TRUB1"/>
    <property type="match status" value="1"/>
</dbReference>
<dbReference type="PANTHER" id="PTHR13767">
    <property type="entry name" value="TRNA-PSEUDOURIDINE SYNTHASE"/>
    <property type="match status" value="1"/>
</dbReference>
<dbReference type="Pfam" id="PF09157">
    <property type="entry name" value="TruB-C_2"/>
    <property type="match status" value="1"/>
</dbReference>
<dbReference type="Pfam" id="PF16198">
    <property type="entry name" value="TruB_C_2"/>
    <property type="match status" value="1"/>
</dbReference>
<dbReference type="Pfam" id="PF01509">
    <property type="entry name" value="TruB_N"/>
    <property type="match status" value="1"/>
</dbReference>
<dbReference type="SUPFAM" id="SSF55120">
    <property type="entry name" value="Pseudouridine synthase"/>
    <property type="match status" value="1"/>
</dbReference>
<dbReference type="SUPFAM" id="SSF88697">
    <property type="entry name" value="PUA domain-like"/>
    <property type="match status" value="1"/>
</dbReference>
<sequence>MARRSKGRFIDGIVLLDKATGMSSNFALQRVKRFFNANKAGHTGALDPLATGMLPVCLGEATKFSQHLLDSDKRYLVTAKLGQRTDTSDSDGEVVQTRPLEFTEAQLMSALEHFRGDTQQVPSMYSALKYQGQPLYKYAREGIEVPREARPITVFELNFISLEGDELTLDIHCSKGTYIRTIIDDLGEMLGCGAHVIMLRRTQVAHYPYDKMVTLEQLEALVAKAQEEQLDSSSLLDSLLLPMDTAVADFPEVNVPDASAAYLMQGQAVRVSGLVADKLVRITLGTERRFVGIGKMNEDGLLAPKRLVVIHDQAKAS</sequence>
<evidence type="ECO:0000255" key="1">
    <source>
        <dbReference type="HAMAP-Rule" id="MF_01080"/>
    </source>
</evidence>
<name>TRUB_SHESR</name>
<organism>
    <name type="scientific">Shewanella sp. (strain MR-7)</name>
    <dbReference type="NCBI Taxonomy" id="60481"/>
    <lineage>
        <taxon>Bacteria</taxon>
        <taxon>Pseudomonadati</taxon>
        <taxon>Pseudomonadota</taxon>
        <taxon>Gammaproteobacteria</taxon>
        <taxon>Alteromonadales</taxon>
        <taxon>Shewanellaceae</taxon>
        <taxon>Shewanella</taxon>
    </lineage>
</organism>
<protein>
    <recommendedName>
        <fullName evidence="1">tRNA pseudouridine synthase B</fullName>
        <ecNumber evidence="1">5.4.99.25</ecNumber>
    </recommendedName>
    <alternativeName>
        <fullName evidence="1">tRNA pseudouridine(55) synthase</fullName>
        <shortName evidence="1">Psi55 synthase</shortName>
    </alternativeName>
    <alternativeName>
        <fullName evidence="1">tRNA pseudouridylate synthase</fullName>
    </alternativeName>
    <alternativeName>
        <fullName evidence="1">tRNA-uridine isomerase</fullName>
    </alternativeName>
</protein>
<accession>Q0HXR3</accession>